<dbReference type="EMBL" id="CP001016">
    <property type="protein sequence ID" value="ACB94740.1"/>
    <property type="molecule type" value="Genomic_DNA"/>
</dbReference>
<dbReference type="RefSeq" id="WP_012384097.1">
    <property type="nucleotide sequence ID" value="NC_010581.1"/>
</dbReference>
<dbReference type="SMR" id="B2IIP7"/>
<dbReference type="STRING" id="395963.Bind_1098"/>
<dbReference type="KEGG" id="bid:Bind_1098"/>
<dbReference type="eggNOG" id="COG2156">
    <property type="taxonomic scope" value="Bacteria"/>
</dbReference>
<dbReference type="HOGENOM" id="CLU_077094_2_0_5"/>
<dbReference type="OrthoDB" id="9788285at2"/>
<dbReference type="Proteomes" id="UP000001695">
    <property type="component" value="Chromosome"/>
</dbReference>
<dbReference type="GO" id="GO:0005886">
    <property type="term" value="C:plasma membrane"/>
    <property type="evidence" value="ECO:0007669"/>
    <property type="project" value="UniProtKB-SubCell"/>
</dbReference>
<dbReference type="GO" id="GO:0005524">
    <property type="term" value="F:ATP binding"/>
    <property type="evidence" value="ECO:0007669"/>
    <property type="project" value="UniProtKB-UniRule"/>
</dbReference>
<dbReference type="GO" id="GO:0008556">
    <property type="term" value="F:P-type potassium transmembrane transporter activity"/>
    <property type="evidence" value="ECO:0007669"/>
    <property type="project" value="InterPro"/>
</dbReference>
<dbReference type="HAMAP" id="MF_00276">
    <property type="entry name" value="KdpC"/>
    <property type="match status" value="1"/>
</dbReference>
<dbReference type="InterPro" id="IPR003820">
    <property type="entry name" value="KdpC"/>
</dbReference>
<dbReference type="NCBIfam" id="TIGR00681">
    <property type="entry name" value="kdpC"/>
    <property type="match status" value="1"/>
</dbReference>
<dbReference type="NCBIfam" id="NF001454">
    <property type="entry name" value="PRK00315.1"/>
    <property type="match status" value="1"/>
</dbReference>
<dbReference type="PANTHER" id="PTHR30042">
    <property type="entry name" value="POTASSIUM-TRANSPORTING ATPASE C CHAIN"/>
    <property type="match status" value="1"/>
</dbReference>
<dbReference type="PANTHER" id="PTHR30042:SF2">
    <property type="entry name" value="POTASSIUM-TRANSPORTING ATPASE KDPC SUBUNIT"/>
    <property type="match status" value="1"/>
</dbReference>
<dbReference type="Pfam" id="PF02669">
    <property type="entry name" value="KdpC"/>
    <property type="match status" value="1"/>
</dbReference>
<dbReference type="PIRSF" id="PIRSF001296">
    <property type="entry name" value="K_ATPase_KdpC"/>
    <property type="match status" value="1"/>
</dbReference>
<gene>
    <name evidence="1" type="primary">kdpC</name>
    <name type="ordered locus">Bind_1098</name>
</gene>
<feature type="chain" id="PRO_1000114712" description="Potassium-transporting ATPase KdpC subunit">
    <location>
        <begin position="1"/>
        <end position="197"/>
    </location>
</feature>
<feature type="transmembrane region" description="Helical" evidence="1">
    <location>
        <begin position="7"/>
        <end position="27"/>
    </location>
</feature>
<keyword id="KW-0067">ATP-binding</keyword>
<keyword id="KW-0997">Cell inner membrane</keyword>
<keyword id="KW-1003">Cell membrane</keyword>
<keyword id="KW-0406">Ion transport</keyword>
<keyword id="KW-0472">Membrane</keyword>
<keyword id="KW-0547">Nucleotide-binding</keyword>
<keyword id="KW-0630">Potassium</keyword>
<keyword id="KW-0633">Potassium transport</keyword>
<keyword id="KW-1185">Reference proteome</keyword>
<keyword id="KW-0812">Transmembrane</keyword>
<keyword id="KW-1133">Transmembrane helix</keyword>
<keyword id="KW-0813">Transport</keyword>
<sequence length="197" mass="21036">MLQHIRPAFISLILFTLLFGLIYPLTVTGIAQFVFPDQASGSLIFQGDQVVGSRLIGQAFHRPEYLHPRPSIAGDGYDASASSGSNLGPLNPDLVKQVTERAAAIRVENQDQEAVIPADAVTASGSGLDPEISPAYAGLQAKRVASARAMPVVEVERIVAENTQPAFLGFIGQPRVNVLAVNLALDARFPIQRPPMP</sequence>
<evidence type="ECO:0000255" key="1">
    <source>
        <dbReference type="HAMAP-Rule" id="MF_00276"/>
    </source>
</evidence>
<accession>B2IIP7</accession>
<protein>
    <recommendedName>
        <fullName evidence="1">Potassium-transporting ATPase KdpC subunit</fullName>
    </recommendedName>
    <alternativeName>
        <fullName evidence="1">ATP phosphohydrolase [potassium-transporting] C chain</fullName>
    </alternativeName>
    <alternativeName>
        <fullName evidence="1">Potassium-binding and translocating subunit C</fullName>
    </alternativeName>
    <alternativeName>
        <fullName evidence="1">Potassium-translocating ATPase C chain</fullName>
    </alternativeName>
</protein>
<comment type="function">
    <text evidence="1">Part of the high-affinity ATP-driven potassium transport (or Kdp) system, which catalyzes the hydrolysis of ATP coupled with the electrogenic transport of potassium into the cytoplasm. This subunit acts as a catalytic chaperone that increases the ATP-binding affinity of the ATP-hydrolyzing subunit KdpB by the formation of a transient KdpB/KdpC/ATP ternary complex.</text>
</comment>
<comment type="subunit">
    <text evidence="1">The system is composed of three essential subunits: KdpA, KdpB and KdpC.</text>
</comment>
<comment type="subcellular location">
    <subcellularLocation>
        <location evidence="1">Cell inner membrane</location>
        <topology evidence="1">Single-pass membrane protein</topology>
    </subcellularLocation>
</comment>
<comment type="similarity">
    <text evidence="1">Belongs to the KdpC family.</text>
</comment>
<proteinExistence type="inferred from homology"/>
<organism>
    <name type="scientific">Beijerinckia indica subsp. indica (strain ATCC 9039 / DSM 1715 / NCIMB 8712)</name>
    <dbReference type="NCBI Taxonomy" id="395963"/>
    <lineage>
        <taxon>Bacteria</taxon>
        <taxon>Pseudomonadati</taxon>
        <taxon>Pseudomonadota</taxon>
        <taxon>Alphaproteobacteria</taxon>
        <taxon>Hyphomicrobiales</taxon>
        <taxon>Beijerinckiaceae</taxon>
        <taxon>Beijerinckia</taxon>
    </lineage>
</organism>
<name>KDPC_BEII9</name>
<reference key="1">
    <citation type="journal article" date="2010" name="J. Bacteriol.">
        <title>Complete genome sequence of Beijerinckia indica subsp. indica.</title>
        <authorList>
            <person name="Tamas I."/>
            <person name="Dedysh S.N."/>
            <person name="Liesack W."/>
            <person name="Stott M.B."/>
            <person name="Alam M."/>
            <person name="Murrell J.C."/>
            <person name="Dunfield P.F."/>
        </authorList>
    </citation>
    <scope>NUCLEOTIDE SEQUENCE [LARGE SCALE GENOMIC DNA]</scope>
    <source>
        <strain>ATCC 9039 / DSM 1715 / NCIMB 8712</strain>
    </source>
</reference>